<evidence type="ECO:0000255" key="1">
    <source>
        <dbReference type="HAMAP-Rule" id="MF_00435"/>
    </source>
</evidence>
<evidence type="ECO:0000255" key="2">
    <source>
        <dbReference type="PROSITE-ProRule" id="PRU01197"/>
    </source>
</evidence>
<evidence type="ECO:0000255" key="3">
    <source>
        <dbReference type="PROSITE-ProRule" id="PRU01198"/>
    </source>
</evidence>
<keyword id="KW-0028">Amino-acid biosynthesis</keyword>
<keyword id="KW-0100">Branched-chain amino acid biosynthesis</keyword>
<keyword id="KW-0460">Magnesium</keyword>
<keyword id="KW-0479">Metal-binding</keyword>
<keyword id="KW-0521">NADP</keyword>
<keyword id="KW-0560">Oxidoreductase</keyword>
<keyword id="KW-1185">Reference proteome</keyword>
<protein>
    <recommendedName>
        <fullName evidence="1">Ketol-acid reductoisomerase (NADP(+))</fullName>
        <shortName evidence="1">KARI</shortName>
        <ecNumber evidence="1">1.1.1.86</ecNumber>
    </recommendedName>
    <alternativeName>
        <fullName evidence="1">Acetohydroxy-acid isomeroreductase</fullName>
        <shortName evidence="1">AHIR</shortName>
    </alternativeName>
    <alternativeName>
        <fullName evidence="1">Alpha-keto-beta-hydroxylacyl reductoisomerase</fullName>
    </alternativeName>
    <alternativeName>
        <fullName evidence="1">Ketol-acid reductoisomerase type 1</fullName>
    </alternativeName>
    <alternativeName>
        <fullName evidence="1">Ketol-acid reductoisomerase type I</fullName>
    </alternativeName>
</protein>
<accession>Q7V8M5</accession>
<feature type="chain" id="PRO_0000151340" description="Ketol-acid reductoisomerase (NADP(+))">
    <location>
        <begin position="1"/>
        <end position="331"/>
    </location>
</feature>
<feature type="domain" description="KARI N-terminal Rossmann" evidence="2">
    <location>
        <begin position="2"/>
        <end position="182"/>
    </location>
</feature>
<feature type="domain" description="KARI C-terminal knotted" evidence="3">
    <location>
        <begin position="183"/>
        <end position="328"/>
    </location>
</feature>
<feature type="active site" evidence="1">
    <location>
        <position position="108"/>
    </location>
</feature>
<feature type="binding site" evidence="1">
    <location>
        <begin position="25"/>
        <end position="28"/>
    </location>
    <ligand>
        <name>NADP(+)</name>
        <dbReference type="ChEBI" id="CHEBI:58349"/>
    </ligand>
</feature>
<feature type="binding site" evidence="1">
    <location>
        <position position="51"/>
    </location>
    <ligand>
        <name>NADP(+)</name>
        <dbReference type="ChEBI" id="CHEBI:58349"/>
    </ligand>
</feature>
<feature type="binding site" evidence="1">
    <location>
        <position position="53"/>
    </location>
    <ligand>
        <name>NADP(+)</name>
        <dbReference type="ChEBI" id="CHEBI:58349"/>
    </ligand>
</feature>
<feature type="binding site" evidence="1">
    <location>
        <begin position="83"/>
        <end position="86"/>
    </location>
    <ligand>
        <name>NADP(+)</name>
        <dbReference type="ChEBI" id="CHEBI:58349"/>
    </ligand>
</feature>
<feature type="binding site" evidence="1">
    <location>
        <position position="134"/>
    </location>
    <ligand>
        <name>NADP(+)</name>
        <dbReference type="ChEBI" id="CHEBI:58349"/>
    </ligand>
</feature>
<feature type="binding site" evidence="1">
    <location>
        <position position="191"/>
    </location>
    <ligand>
        <name>Mg(2+)</name>
        <dbReference type="ChEBI" id="CHEBI:18420"/>
        <label>1</label>
    </ligand>
</feature>
<feature type="binding site" evidence="1">
    <location>
        <position position="191"/>
    </location>
    <ligand>
        <name>Mg(2+)</name>
        <dbReference type="ChEBI" id="CHEBI:18420"/>
        <label>2</label>
    </ligand>
</feature>
<feature type="binding site" evidence="1">
    <location>
        <position position="195"/>
    </location>
    <ligand>
        <name>Mg(2+)</name>
        <dbReference type="ChEBI" id="CHEBI:18420"/>
        <label>1</label>
    </ligand>
</feature>
<feature type="binding site" evidence="1">
    <location>
        <position position="227"/>
    </location>
    <ligand>
        <name>Mg(2+)</name>
        <dbReference type="ChEBI" id="CHEBI:18420"/>
        <label>2</label>
    </ligand>
</feature>
<feature type="binding site" evidence="1">
    <location>
        <position position="231"/>
    </location>
    <ligand>
        <name>Mg(2+)</name>
        <dbReference type="ChEBI" id="CHEBI:18420"/>
        <label>2</label>
    </ligand>
</feature>
<feature type="binding site" evidence="1">
    <location>
        <position position="252"/>
    </location>
    <ligand>
        <name>substrate</name>
    </ligand>
</feature>
<dbReference type="EC" id="1.1.1.86" evidence="1"/>
<dbReference type="EMBL" id="BX548175">
    <property type="protein sequence ID" value="CAE20488.1"/>
    <property type="molecule type" value="Genomic_DNA"/>
</dbReference>
<dbReference type="RefSeq" id="WP_011129692.1">
    <property type="nucleotide sequence ID" value="NC_005071.1"/>
</dbReference>
<dbReference type="SMR" id="Q7V8M5"/>
<dbReference type="KEGG" id="pmt:PMT_0313"/>
<dbReference type="eggNOG" id="COG0059">
    <property type="taxonomic scope" value="Bacteria"/>
</dbReference>
<dbReference type="HOGENOM" id="CLU_033821_0_1_3"/>
<dbReference type="OrthoDB" id="9804088at2"/>
<dbReference type="UniPathway" id="UPA00047">
    <property type="reaction ID" value="UER00056"/>
</dbReference>
<dbReference type="UniPathway" id="UPA00049">
    <property type="reaction ID" value="UER00060"/>
</dbReference>
<dbReference type="Proteomes" id="UP000001423">
    <property type="component" value="Chromosome"/>
</dbReference>
<dbReference type="GO" id="GO:0005829">
    <property type="term" value="C:cytosol"/>
    <property type="evidence" value="ECO:0007669"/>
    <property type="project" value="TreeGrafter"/>
</dbReference>
<dbReference type="GO" id="GO:0004455">
    <property type="term" value="F:ketol-acid reductoisomerase activity"/>
    <property type="evidence" value="ECO:0007669"/>
    <property type="project" value="UniProtKB-UniRule"/>
</dbReference>
<dbReference type="GO" id="GO:0000287">
    <property type="term" value="F:magnesium ion binding"/>
    <property type="evidence" value="ECO:0007669"/>
    <property type="project" value="UniProtKB-UniRule"/>
</dbReference>
<dbReference type="GO" id="GO:0050661">
    <property type="term" value="F:NADP binding"/>
    <property type="evidence" value="ECO:0007669"/>
    <property type="project" value="InterPro"/>
</dbReference>
<dbReference type="GO" id="GO:0009097">
    <property type="term" value="P:isoleucine biosynthetic process"/>
    <property type="evidence" value="ECO:0007669"/>
    <property type="project" value="UniProtKB-UniRule"/>
</dbReference>
<dbReference type="GO" id="GO:0009099">
    <property type="term" value="P:L-valine biosynthetic process"/>
    <property type="evidence" value="ECO:0007669"/>
    <property type="project" value="UniProtKB-UniRule"/>
</dbReference>
<dbReference type="FunFam" id="3.40.50.720:FF:000023">
    <property type="entry name" value="Ketol-acid reductoisomerase (NADP(+))"/>
    <property type="match status" value="1"/>
</dbReference>
<dbReference type="Gene3D" id="6.10.240.10">
    <property type="match status" value="1"/>
</dbReference>
<dbReference type="Gene3D" id="3.40.50.720">
    <property type="entry name" value="NAD(P)-binding Rossmann-like Domain"/>
    <property type="match status" value="1"/>
</dbReference>
<dbReference type="HAMAP" id="MF_00435">
    <property type="entry name" value="IlvC"/>
    <property type="match status" value="1"/>
</dbReference>
<dbReference type="InterPro" id="IPR008927">
    <property type="entry name" value="6-PGluconate_DH-like_C_sf"/>
</dbReference>
<dbReference type="InterPro" id="IPR013023">
    <property type="entry name" value="KARI"/>
</dbReference>
<dbReference type="InterPro" id="IPR000506">
    <property type="entry name" value="KARI_C"/>
</dbReference>
<dbReference type="InterPro" id="IPR013116">
    <property type="entry name" value="KARI_N"/>
</dbReference>
<dbReference type="InterPro" id="IPR014359">
    <property type="entry name" value="KARI_prok"/>
</dbReference>
<dbReference type="InterPro" id="IPR036291">
    <property type="entry name" value="NAD(P)-bd_dom_sf"/>
</dbReference>
<dbReference type="NCBIfam" id="TIGR00465">
    <property type="entry name" value="ilvC"/>
    <property type="match status" value="1"/>
</dbReference>
<dbReference type="NCBIfam" id="NF004017">
    <property type="entry name" value="PRK05479.1"/>
    <property type="match status" value="1"/>
</dbReference>
<dbReference type="NCBIfam" id="NF009940">
    <property type="entry name" value="PRK13403.1"/>
    <property type="match status" value="1"/>
</dbReference>
<dbReference type="PANTHER" id="PTHR21371">
    <property type="entry name" value="KETOL-ACID REDUCTOISOMERASE, MITOCHONDRIAL"/>
    <property type="match status" value="1"/>
</dbReference>
<dbReference type="PANTHER" id="PTHR21371:SF1">
    <property type="entry name" value="KETOL-ACID REDUCTOISOMERASE, MITOCHONDRIAL"/>
    <property type="match status" value="1"/>
</dbReference>
<dbReference type="Pfam" id="PF01450">
    <property type="entry name" value="KARI_C"/>
    <property type="match status" value="1"/>
</dbReference>
<dbReference type="Pfam" id="PF07991">
    <property type="entry name" value="KARI_N"/>
    <property type="match status" value="1"/>
</dbReference>
<dbReference type="PIRSF" id="PIRSF000116">
    <property type="entry name" value="IlvC_gammaproteo"/>
    <property type="match status" value="1"/>
</dbReference>
<dbReference type="SUPFAM" id="SSF48179">
    <property type="entry name" value="6-phosphogluconate dehydrogenase C-terminal domain-like"/>
    <property type="match status" value="1"/>
</dbReference>
<dbReference type="SUPFAM" id="SSF51735">
    <property type="entry name" value="NAD(P)-binding Rossmann-fold domains"/>
    <property type="match status" value="1"/>
</dbReference>
<dbReference type="PROSITE" id="PS51851">
    <property type="entry name" value="KARI_C"/>
    <property type="match status" value="1"/>
</dbReference>
<dbReference type="PROSITE" id="PS51850">
    <property type="entry name" value="KARI_N"/>
    <property type="match status" value="1"/>
</dbReference>
<organism>
    <name type="scientific">Prochlorococcus marinus (strain MIT 9313)</name>
    <dbReference type="NCBI Taxonomy" id="74547"/>
    <lineage>
        <taxon>Bacteria</taxon>
        <taxon>Bacillati</taxon>
        <taxon>Cyanobacteriota</taxon>
        <taxon>Cyanophyceae</taxon>
        <taxon>Synechococcales</taxon>
        <taxon>Prochlorococcaceae</taxon>
        <taxon>Prochlorococcus</taxon>
    </lineage>
</organism>
<reference key="1">
    <citation type="journal article" date="2003" name="Nature">
        <title>Genome divergence in two Prochlorococcus ecotypes reflects oceanic niche differentiation.</title>
        <authorList>
            <person name="Rocap G."/>
            <person name="Larimer F.W."/>
            <person name="Lamerdin J.E."/>
            <person name="Malfatti S."/>
            <person name="Chain P."/>
            <person name="Ahlgren N.A."/>
            <person name="Arellano A."/>
            <person name="Coleman M."/>
            <person name="Hauser L."/>
            <person name="Hess W.R."/>
            <person name="Johnson Z.I."/>
            <person name="Land M.L."/>
            <person name="Lindell D."/>
            <person name="Post A.F."/>
            <person name="Regala W."/>
            <person name="Shah M."/>
            <person name="Shaw S.L."/>
            <person name="Steglich C."/>
            <person name="Sullivan M.B."/>
            <person name="Ting C.S."/>
            <person name="Tolonen A."/>
            <person name="Webb E.A."/>
            <person name="Zinser E.R."/>
            <person name="Chisholm S.W."/>
        </authorList>
    </citation>
    <scope>NUCLEOTIDE SEQUENCE [LARGE SCALE GENOMIC DNA]</scope>
    <source>
        <strain>MIT 9313</strain>
    </source>
</reference>
<comment type="function">
    <text evidence="1">Involved in the biosynthesis of branched-chain amino acids (BCAA). Catalyzes an alkyl-migration followed by a ketol-acid reduction of (S)-2-acetolactate (S2AL) to yield (R)-2,3-dihydroxy-isovalerate. In the isomerase reaction, S2AL is rearranged via a Mg-dependent methyl migration to produce 3-hydroxy-3-methyl-2-ketobutyrate (HMKB). In the reductase reaction, this 2-ketoacid undergoes a metal-dependent reduction by NADPH to yield (R)-2,3-dihydroxy-isovalerate.</text>
</comment>
<comment type="catalytic activity">
    <reaction evidence="1">
        <text>(2R)-2,3-dihydroxy-3-methylbutanoate + NADP(+) = (2S)-2-acetolactate + NADPH + H(+)</text>
        <dbReference type="Rhea" id="RHEA:22068"/>
        <dbReference type="ChEBI" id="CHEBI:15378"/>
        <dbReference type="ChEBI" id="CHEBI:49072"/>
        <dbReference type="ChEBI" id="CHEBI:57783"/>
        <dbReference type="ChEBI" id="CHEBI:58349"/>
        <dbReference type="ChEBI" id="CHEBI:58476"/>
        <dbReference type="EC" id="1.1.1.86"/>
    </reaction>
</comment>
<comment type="catalytic activity">
    <reaction evidence="1">
        <text>(2R,3R)-2,3-dihydroxy-3-methylpentanoate + NADP(+) = (S)-2-ethyl-2-hydroxy-3-oxobutanoate + NADPH + H(+)</text>
        <dbReference type="Rhea" id="RHEA:13493"/>
        <dbReference type="ChEBI" id="CHEBI:15378"/>
        <dbReference type="ChEBI" id="CHEBI:49256"/>
        <dbReference type="ChEBI" id="CHEBI:49258"/>
        <dbReference type="ChEBI" id="CHEBI:57783"/>
        <dbReference type="ChEBI" id="CHEBI:58349"/>
        <dbReference type="EC" id="1.1.1.86"/>
    </reaction>
</comment>
<comment type="cofactor">
    <cofactor evidence="1">
        <name>Mg(2+)</name>
        <dbReference type="ChEBI" id="CHEBI:18420"/>
    </cofactor>
    <text evidence="1">Binds 2 magnesium ions per subunit.</text>
</comment>
<comment type="pathway">
    <text evidence="1">Amino-acid biosynthesis; L-isoleucine biosynthesis; L-isoleucine from 2-oxobutanoate: step 2/4.</text>
</comment>
<comment type="pathway">
    <text evidence="1">Amino-acid biosynthesis; L-valine biosynthesis; L-valine from pyruvate: step 2/4.</text>
</comment>
<comment type="similarity">
    <text evidence="1">Belongs to the ketol-acid reductoisomerase family.</text>
</comment>
<proteinExistence type="inferred from homology"/>
<name>ILVC_PROMM</name>
<gene>
    <name evidence="1" type="primary">ilvC</name>
    <name type="ordered locus">PMT_0313</name>
</gene>
<sequence>MAQLFYDSDADLGLLNGKTVAIIGYGSQGHAHALNLKDSGVDVVVGLYEGSRSAEKARADGLEVLSVAEAAAKADWIMVLLPDEFQKDVYAKEIASHLSSGKVLSFAHGFNIRFGLIQPPADVDVVMIAPKGPGHTVRWEYQNGQGVPALFAIEQDASGQARALAMAYAKGIGGTRAGILETNFKEETETDLFGEQAVLCGGLSELVKAGFETLVEAGYQPELAYFECLHEVKLIVDLMVKGGLTAMRDSISNTAEYGDYVSGPRLINADTKAEMKRILADIQDGTFAKNFVAECESGKPEMKKIRDRDANHPIEQVGKGLRAMFSWLKTA</sequence>